<keyword id="KW-0165">Cleavage on pair of basic residues</keyword>
<keyword id="KW-1015">Disulfide bond</keyword>
<keyword id="KW-0325">Glycoprotein</keyword>
<keyword id="KW-0339">Growth factor</keyword>
<keyword id="KW-0372">Hormone</keyword>
<keyword id="KW-0964">Secreted</keyword>
<keyword id="KW-0732">Signal</keyword>
<comment type="function">
    <text evidence="2">Inhibins and activins inhibit and activate, respectively, the secretion of follitropin by the pituitary gland. Inhibins/activins are involved in regulating a number of diverse functions such as hypothalamic and pituitary hormone secretion, gonadal hormone secretion, germ cell development and maturation, erythroid differentiation, insulin secretion, nerve cell survival, embryonic axial development or bone growth, depending on their subunit composition. Inhibins appear to oppose the functions of activins.</text>
</comment>
<comment type="function">
    <text evidence="3">Inhibin A is a dimer of alpha/INHA and beta-A/INHBA that functions as a feedback regulator in the hypothalamic-pituitary-gonadal (HPG) axis. Inhibits the secretion of FSH from the anterior pituitary gland by acting on pituitary gonadotrope cells. Antagonizes activin A by binding to the proteoglycan, betaglycan, and forming a stable complex with and, thereby, sequestering type II activin receptors while excluding type I receptor.</text>
</comment>
<comment type="function">
    <text evidence="2 4">Inhibin B is a dimer of alpha and beta-B that plays a crucial role in the regulation of the reproductive system by inhibiting the secretion of follicle-stimulating hormone (FSH) from the anterior pituitary gland. Thereby, maintains reproductive homeostasis in both males and females. Acts as a more potent suppressor of FSH release than inhibin A (By similarity). Functions as competitive receptor antagonist binding activin type II receptors with high affinity in the presence of the TGF-beta type III coreceptor/TGFBR3L (By similarity).</text>
</comment>
<comment type="subunit">
    <text evidence="2">Dimeric, linked by one or more disulfide bonds. Activin B is a dimer of alpha and beta-B. Inhibin A is a dimer of alpha and beta-A. Inhibin B is a dimer of alpha and beta-B. Interacts with TGFBR3L; this interaction regulates female fertility.</text>
</comment>
<comment type="subcellular location">
    <subcellularLocation>
        <location evidence="4">Secreted</location>
    </subcellularLocation>
</comment>
<comment type="PTM">
    <text>Proteolytic processing yields a number of bioactive forms, consisting either solely of the mature alpha chain, of the most N-terminal propeptide linked through a disulfide bond to the mature alpha chain, or of the entire proprotein.</text>
</comment>
<comment type="similarity">
    <text evidence="7">Belongs to the TGF-beta family.</text>
</comment>
<dbReference type="EMBL" id="AF033340">
    <property type="protein sequence ID" value="AAC63945.1"/>
    <property type="molecule type" value="mRNA"/>
</dbReference>
<dbReference type="GlyCosmos" id="O77755">
    <property type="glycosylation" value="3 sites, No reported glycans"/>
</dbReference>
<dbReference type="GO" id="GO:0005615">
    <property type="term" value="C:extracellular space"/>
    <property type="evidence" value="ECO:0007669"/>
    <property type="project" value="TreeGrafter"/>
</dbReference>
<dbReference type="GO" id="GO:0005125">
    <property type="term" value="F:cytokine activity"/>
    <property type="evidence" value="ECO:0007669"/>
    <property type="project" value="TreeGrafter"/>
</dbReference>
<dbReference type="GO" id="GO:0008083">
    <property type="term" value="F:growth factor activity"/>
    <property type="evidence" value="ECO:0007669"/>
    <property type="project" value="UniProtKB-KW"/>
</dbReference>
<dbReference type="GO" id="GO:0005179">
    <property type="term" value="F:hormone activity"/>
    <property type="evidence" value="ECO:0007669"/>
    <property type="project" value="UniProtKB-KW"/>
</dbReference>
<dbReference type="GO" id="GO:0042541">
    <property type="term" value="P:hemoglobin biosynthetic process"/>
    <property type="evidence" value="ECO:0000250"/>
    <property type="project" value="UniProtKB"/>
</dbReference>
<dbReference type="FunFam" id="2.10.90.10:FF:000024">
    <property type="entry name" value="Inhibin alpha chain"/>
    <property type="match status" value="1"/>
</dbReference>
<dbReference type="Gene3D" id="2.10.90.10">
    <property type="entry name" value="Cystine-knot cytokines"/>
    <property type="match status" value="1"/>
</dbReference>
<dbReference type="InterPro" id="IPR029034">
    <property type="entry name" value="Cystine-knot_cytokine"/>
</dbReference>
<dbReference type="InterPro" id="IPR017175">
    <property type="entry name" value="Inhibin_asu"/>
</dbReference>
<dbReference type="InterPro" id="IPR001839">
    <property type="entry name" value="TGF-b_C"/>
</dbReference>
<dbReference type="InterPro" id="IPR015615">
    <property type="entry name" value="TGF-beta-rel"/>
</dbReference>
<dbReference type="InterPro" id="IPR017948">
    <property type="entry name" value="TGFb_CS"/>
</dbReference>
<dbReference type="PANTHER" id="PTHR11848:SF117">
    <property type="entry name" value="INHIBIN ALPHA CHAIN"/>
    <property type="match status" value="1"/>
</dbReference>
<dbReference type="PANTHER" id="PTHR11848">
    <property type="entry name" value="TGF-BETA FAMILY"/>
    <property type="match status" value="1"/>
</dbReference>
<dbReference type="Pfam" id="PF00019">
    <property type="entry name" value="TGF_beta"/>
    <property type="match status" value="1"/>
</dbReference>
<dbReference type="PIRSF" id="PIRSF037328">
    <property type="entry name" value="Inhibin_alpha_subunit"/>
    <property type="match status" value="1"/>
</dbReference>
<dbReference type="PRINTS" id="PR00669">
    <property type="entry name" value="INHIBINA"/>
</dbReference>
<dbReference type="SMART" id="SM00204">
    <property type="entry name" value="TGFB"/>
    <property type="match status" value="1"/>
</dbReference>
<dbReference type="SUPFAM" id="SSF57501">
    <property type="entry name" value="Cystine-knot cytokines"/>
    <property type="match status" value="1"/>
</dbReference>
<dbReference type="PROSITE" id="PS00250">
    <property type="entry name" value="TGF_BETA_1"/>
    <property type="match status" value="1"/>
</dbReference>
<dbReference type="PROSITE" id="PS51362">
    <property type="entry name" value="TGF_BETA_2"/>
    <property type="match status" value="1"/>
</dbReference>
<accession>O77755</accession>
<feature type="signal peptide" evidence="1">
    <location>
        <begin position="1"/>
        <end position="21"/>
    </location>
</feature>
<feature type="propeptide" id="PRO_0000033699" evidence="1">
    <location>
        <begin position="22"/>
        <end position="64"/>
    </location>
</feature>
<feature type="propeptide" id="PRO_0000033700" description="Inhibin alpha N-terminal region" evidence="1">
    <location>
        <begin position="65"/>
        <end position="230"/>
    </location>
</feature>
<feature type="chain" id="PRO_0000033701" description="Inhibin alpha chain">
    <location>
        <begin position="231"/>
        <end position="361"/>
    </location>
</feature>
<feature type="region of interest" description="Disordered" evidence="6">
    <location>
        <begin position="45"/>
        <end position="82"/>
    </location>
</feature>
<feature type="site" description="Cleavage" evidence="1">
    <location>
        <begin position="64"/>
        <end position="65"/>
    </location>
</feature>
<feature type="site" description="Cleavage" evidence="1">
    <location>
        <begin position="230"/>
        <end position="231"/>
    </location>
</feature>
<feature type="glycosylation site" description="N-linked (GlcNAc...) asparagine" evidence="5">
    <location>
        <position position="48"/>
    </location>
</feature>
<feature type="glycosylation site" description="N-linked (GlcNAc...) asparagine" evidence="5">
    <location>
        <position position="144"/>
    </location>
</feature>
<feature type="glycosylation site" description="N-linked (GlcNAc...) asparagine" evidence="1">
    <location>
        <position position="266"/>
    </location>
</feature>
<feature type="disulfide bond" evidence="1">
    <location>
        <begin position="260"/>
        <end position="323"/>
    </location>
</feature>
<feature type="disulfide bond" evidence="1">
    <location>
        <begin position="289"/>
        <end position="358"/>
    </location>
</feature>
<feature type="disulfide bond" evidence="1">
    <location>
        <begin position="293"/>
        <end position="360"/>
    </location>
</feature>
<feature type="disulfide bond" description="Interchain" evidence="1">
    <location>
        <position position="322"/>
    </location>
</feature>
<proteinExistence type="evidence at transcript level"/>
<protein>
    <recommendedName>
        <fullName>Inhibin alpha chain</fullName>
    </recommendedName>
</protein>
<reference key="1">
    <citation type="journal article" date="1998" name="J. Mol. Endocrinol.">
        <title>cDNA sequence analysis, gene expression and protein localisation of the inhibin alpha subunit of Australian brushtail possum (Trichosurus vulpecula).</title>
        <authorList>
            <person name="Vanmontfort D."/>
            <person name="Fidler A.E."/>
            <person name="Heath D.A."/>
            <person name="Lawrence S.B."/>
            <person name="Tisdall D.J."/>
            <person name="Greenwood P.J."/>
            <person name="McNatty K."/>
        </authorList>
    </citation>
    <scope>NUCLEOTIDE SEQUENCE [MRNA]</scope>
</reference>
<sequence length="361" mass="38945">MLPLLLPLQLLLLMVMKGGHGCQGPELDRELVLAKVRALVLDALGPPNASKDGGKPVAQRLTRRHAHTGGSTRRSMENEDEDLSQVILFPTTGPGCEDEPEARAAEGLFTYTFRPSLHTRSRQVTAAQLWFHTGLDKVGAEVHNDSGPMVTLLAMSSGGPMAVPILLGPAPPHWAVLHLAAPAFTLLTRPLLVLLLRCPNCPCPAQLDATPFLVAHTRARPPSVGERARRSPLPPPWPWSPAALRLLQRPSEDPAAHADCHRAALNISFQELGWDQWIVHPPSFIFHYCHGGCGLVPSPVLSPGAALTPSQPLPLGPGSRPCCAAMPSTMRPLRVRTTSDGGYSFKYEIVPNLLTQHCACI</sequence>
<evidence type="ECO:0000250" key="1"/>
<evidence type="ECO:0000250" key="2">
    <source>
        <dbReference type="UniProtKB" id="P05111"/>
    </source>
</evidence>
<evidence type="ECO:0000250" key="3">
    <source>
        <dbReference type="UniProtKB" id="P08476"/>
    </source>
</evidence>
<evidence type="ECO:0000250" key="4">
    <source>
        <dbReference type="UniProtKB" id="P17490"/>
    </source>
</evidence>
<evidence type="ECO:0000255" key="5"/>
<evidence type="ECO:0000256" key="6">
    <source>
        <dbReference type="SAM" id="MobiDB-lite"/>
    </source>
</evidence>
<evidence type="ECO:0000305" key="7"/>
<organism>
    <name type="scientific">Trichosurus vulpecula</name>
    <name type="common">Brush-tailed possum</name>
    <dbReference type="NCBI Taxonomy" id="9337"/>
    <lineage>
        <taxon>Eukaryota</taxon>
        <taxon>Metazoa</taxon>
        <taxon>Chordata</taxon>
        <taxon>Craniata</taxon>
        <taxon>Vertebrata</taxon>
        <taxon>Euteleostomi</taxon>
        <taxon>Mammalia</taxon>
        <taxon>Metatheria</taxon>
        <taxon>Diprotodontia</taxon>
        <taxon>Phalangeridae</taxon>
        <taxon>Trichosurus</taxon>
    </lineage>
</organism>
<gene>
    <name type="primary">INHA</name>
</gene>
<name>INHA_TRIVU</name>